<gene>
    <name type="primary">srrt-b</name>
    <name type="synonym">ars2-b</name>
</gene>
<sequence>MADSDDEHDRRRRDKFRRERSDYDRSREREERRRDDWSDREWDRGRERRSRGEYRDYESRSRRDRFSPQRHDISPPQKRMRRDWDDHGSDPYHSGYEMPYSSSAGPAYGPPQPWGHPEMHVMQHHGIPIQARLGNLHDVDLGTPAPTMKTFKEFLLSLEDSVDETEAVKRYNDYKIDFRRQQMQEFFLAHKDEEWFRSKYHPDEVGKHKQESRASLHNRLNAFMFLMENSWLNEVQLDIAQSTAIIKVLDAAVIKMEGGTEIDLKILDEEEEEAKREAAKKEEARVTETEKVITEEKEAPAKPEKDKEPESEEKPVKPEEEEEKKVEKEEPERETRKPGTRKRKRSGDSDDGSDSESDTETASPKPETPNQNGCEDTPKKEEETEKPKEKPKEDTVKPRPLHKTCSIFMRNIPPNISKAEITALCKRYPGFMRVALSEPQPERRFLRKAYVTFDRSVNIKEICWSVQNIRLRECELSPGVNRDLTYRVRNINGITLHRPIVRNDIKLAARLIHALDERAQLWEGEQGDQVVSAQNPILKNITDYLIDEVNAEEEELLSSAGRTPETEAPKEGNPTEITVERDEKLIKVLDKLLFYLRIVHSVDYYNTCEYPNEDEMPTRCGMMHVRGPLPPNRVSHGEVTEWQKTIEEKLAPLFAVRETLSEDEAMKMGKKDPEQEAEKFVTANTQELGKEKWLCPLSGKKFKGPEFVRKHIFNKHAEKIEEVKKEVEFFNNYLTDSKRPALPEVKPLQPPGGAAGQALAAGLLYPPQGPQALLPYGQPRPPVLGYGGAPQFPPNPYGAGRGNYDSFRGQGMYPGKPRNRMMRGDPRSIIEYRDLDAPDDVDFF</sequence>
<comment type="function">
    <text evidence="1">Acts as a mediator between the cap-binding complex (CBC) and the primary microRNAs (miRNAs) processing machinery during cell proliferation. Contributes to the stability and delivery of capped primary miRNA transcripts to the primary miRNA processing complex, thereby playing a role in RNA-mediated gene silencing (RNAi) by miRNAs (By similarity).</text>
</comment>
<comment type="subunit">
    <text evidence="1">Interacts ncbp1/cbp80.</text>
</comment>
<comment type="subcellular location">
    <subcellularLocation>
        <location evidence="1">Nucleus</location>
        <location evidence="1">Nucleoplasm</location>
    </subcellularLocation>
    <subcellularLocation>
        <location evidence="1">Cytoplasm</location>
    </subcellularLocation>
    <text evidence="1">Predominantly nuclear. Shuttles between the nucleus and the cytoplasm (By similarity).</text>
</comment>
<comment type="similarity">
    <text evidence="3">Belongs to the ARS2 family.</text>
</comment>
<comment type="sequence caution" evidence="3">
    <conflict type="miscellaneous discrepancy">
        <sequence resource="EMBL-CDS" id="AAH41542"/>
    </conflict>
    <text>Contaminating sequence. Potential poly-A sequence.</text>
</comment>
<keyword id="KW-0963">Cytoplasm</keyword>
<keyword id="KW-0539">Nucleus</keyword>
<keyword id="KW-1185">Reference proteome</keyword>
<keyword id="KW-0943">RNA-mediated gene silencing</keyword>
<proteinExistence type="evidence at transcript level"/>
<organism>
    <name type="scientific">Xenopus laevis</name>
    <name type="common">African clawed frog</name>
    <dbReference type="NCBI Taxonomy" id="8355"/>
    <lineage>
        <taxon>Eukaryota</taxon>
        <taxon>Metazoa</taxon>
        <taxon>Chordata</taxon>
        <taxon>Craniata</taxon>
        <taxon>Vertebrata</taxon>
        <taxon>Euteleostomi</taxon>
        <taxon>Amphibia</taxon>
        <taxon>Batrachia</taxon>
        <taxon>Anura</taxon>
        <taxon>Pipoidea</taxon>
        <taxon>Pipidae</taxon>
        <taxon>Xenopodinae</taxon>
        <taxon>Xenopus</taxon>
        <taxon>Xenopus</taxon>
    </lineage>
</organism>
<feature type="chain" id="PRO_0000385213" description="Serrate RNA effector molecule homolog B">
    <location>
        <begin position="1"/>
        <end position="844"/>
    </location>
</feature>
<feature type="region of interest" description="Disordered" evidence="2">
    <location>
        <begin position="1"/>
        <end position="90"/>
    </location>
</feature>
<feature type="region of interest" description="Disordered" evidence="2">
    <location>
        <begin position="277"/>
        <end position="401"/>
    </location>
</feature>
<feature type="region of interest" description="Disordered" evidence="2">
    <location>
        <begin position="555"/>
        <end position="575"/>
    </location>
</feature>
<feature type="region of interest" description="Disordered" evidence="2">
    <location>
        <begin position="794"/>
        <end position="825"/>
    </location>
</feature>
<feature type="compositionally biased region" description="Basic and acidic residues" evidence="2">
    <location>
        <begin position="16"/>
        <end position="73"/>
    </location>
</feature>
<feature type="compositionally biased region" description="Basic and acidic residues" evidence="2">
    <location>
        <begin position="277"/>
        <end position="337"/>
    </location>
</feature>
<feature type="compositionally biased region" description="Acidic residues" evidence="2">
    <location>
        <begin position="349"/>
        <end position="359"/>
    </location>
</feature>
<feature type="compositionally biased region" description="Basic and acidic residues" evidence="2">
    <location>
        <begin position="376"/>
        <end position="397"/>
    </location>
</feature>
<reference key="1">
    <citation type="submission" date="2004-06" db="EMBL/GenBank/DDBJ databases">
        <authorList>
            <consortium name="NIH - Xenopus Gene Collection (XGC) project"/>
        </authorList>
    </citation>
    <scope>NUCLEOTIDE SEQUENCE [LARGE SCALE MRNA]</scope>
    <source>
        <tissue>Embryo</tissue>
    </source>
</reference>
<dbReference type="EMBL" id="BC041542">
    <property type="protein sequence ID" value="AAH41542.1"/>
    <property type="status" value="ALT_SEQ"/>
    <property type="molecule type" value="mRNA"/>
</dbReference>
<dbReference type="EMBL" id="BC072306">
    <property type="protein sequence ID" value="AAH72306.1"/>
    <property type="molecule type" value="mRNA"/>
</dbReference>
<dbReference type="RefSeq" id="NP_001082532.1">
    <property type="nucleotide sequence ID" value="NM_001089063.1"/>
</dbReference>
<dbReference type="SMR" id="Q6INH5"/>
<dbReference type="DNASU" id="398542"/>
<dbReference type="GeneID" id="398542"/>
<dbReference type="KEGG" id="xla:398542"/>
<dbReference type="AGR" id="Xenbase:XB-GENE-5825723"/>
<dbReference type="CTD" id="398542"/>
<dbReference type="Xenbase" id="XB-GENE-5825723">
    <property type="gene designation" value="srrt.L"/>
</dbReference>
<dbReference type="OrthoDB" id="342064at2759"/>
<dbReference type="Proteomes" id="UP000186698">
    <property type="component" value="Chromosome 3L"/>
</dbReference>
<dbReference type="Bgee" id="398542">
    <property type="expression patterns" value="Expressed in neurula embryo and 19 other cell types or tissues"/>
</dbReference>
<dbReference type="GO" id="GO:0005737">
    <property type="term" value="C:cytoplasm"/>
    <property type="evidence" value="ECO:0000250"/>
    <property type="project" value="UniProtKB"/>
</dbReference>
<dbReference type="GO" id="GO:0016604">
    <property type="term" value="C:nuclear body"/>
    <property type="evidence" value="ECO:0000318"/>
    <property type="project" value="GO_Central"/>
</dbReference>
<dbReference type="GO" id="GO:0005654">
    <property type="term" value="C:nucleoplasm"/>
    <property type="evidence" value="ECO:0000250"/>
    <property type="project" value="UniProtKB"/>
</dbReference>
<dbReference type="GO" id="GO:0003676">
    <property type="term" value="F:nucleic acid binding"/>
    <property type="evidence" value="ECO:0007669"/>
    <property type="project" value="InterPro"/>
</dbReference>
<dbReference type="GO" id="GO:0031053">
    <property type="term" value="P:primary miRNA processing"/>
    <property type="evidence" value="ECO:0000250"/>
    <property type="project" value="UniProtKB"/>
</dbReference>
<dbReference type="Gene3D" id="3.30.70.330">
    <property type="match status" value="1"/>
</dbReference>
<dbReference type="InterPro" id="IPR012677">
    <property type="entry name" value="Nucleotide-bd_a/b_plait_sf"/>
</dbReference>
<dbReference type="InterPro" id="IPR035979">
    <property type="entry name" value="RBD_domain_sf"/>
</dbReference>
<dbReference type="InterPro" id="IPR039727">
    <property type="entry name" value="SE/Ars2"/>
</dbReference>
<dbReference type="InterPro" id="IPR007042">
    <property type="entry name" value="SERRATE/Ars2_C"/>
</dbReference>
<dbReference type="InterPro" id="IPR021933">
    <property type="entry name" value="SERRATE/Ars2_N"/>
</dbReference>
<dbReference type="PANTHER" id="PTHR13165">
    <property type="entry name" value="ARSENITE-RESISTANCE PROTEIN 2"/>
    <property type="match status" value="1"/>
</dbReference>
<dbReference type="PANTHER" id="PTHR13165:SF0">
    <property type="entry name" value="SERRATE RNA EFFECTOR MOLECULE HOMOLOG"/>
    <property type="match status" value="1"/>
</dbReference>
<dbReference type="Pfam" id="PF04959">
    <property type="entry name" value="ARS2"/>
    <property type="match status" value="1"/>
</dbReference>
<dbReference type="Pfam" id="PF12066">
    <property type="entry name" value="SERRATE_Ars2_N"/>
    <property type="match status" value="1"/>
</dbReference>
<dbReference type="SUPFAM" id="SSF54928">
    <property type="entry name" value="RNA-binding domain, RBD"/>
    <property type="match status" value="1"/>
</dbReference>
<accession>Q6INH5</accession>
<accession>Q8AVP5</accession>
<protein>
    <recommendedName>
        <fullName>Serrate RNA effector molecule homolog B</fullName>
    </recommendedName>
    <alternativeName>
        <fullName>Arsenite-resistance protein 2-B</fullName>
    </alternativeName>
</protein>
<evidence type="ECO:0000250" key="1"/>
<evidence type="ECO:0000256" key="2">
    <source>
        <dbReference type="SAM" id="MobiDB-lite"/>
    </source>
</evidence>
<evidence type="ECO:0000305" key="3"/>
<name>SRRTB_XENLA</name>